<proteinExistence type="inferred from homology"/>
<name>GYRA_RICFE</name>
<evidence type="ECO:0000255" key="1">
    <source>
        <dbReference type="HAMAP-Rule" id="MF_01897"/>
    </source>
</evidence>
<evidence type="ECO:0000255" key="2">
    <source>
        <dbReference type="PROSITE-ProRule" id="PRU01384"/>
    </source>
</evidence>
<evidence type="ECO:0000256" key="3">
    <source>
        <dbReference type="SAM" id="MobiDB-lite"/>
    </source>
</evidence>
<organism>
    <name type="scientific">Rickettsia felis (strain ATCC VR-1525 / URRWXCal2)</name>
    <name type="common">Rickettsia azadi</name>
    <dbReference type="NCBI Taxonomy" id="315456"/>
    <lineage>
        <taxon>Bacteria</taxon>
        <taxon>Pseudomonadati</taxon>
        <taxon>Pseudomonadota</taxon>
        <taxon>Alphaproteobacteria</taxon>
        <taxon>Rickettsiales</taxon>
        <taxon>Rickettsiaceae</taxon>
        <taxon>Rickettsieae</taxon>
        <taxon>Rickettsia</taxon>
        <taxon>spotted fever group</taxon>
    </lineage>
</organism>
<reference key="1">
    <citation type="journal article" date="2005" name="PLoS Biol.">
        <title>The genome sequence of Rickettsia felis identifies the first putative conjugative plasmid in an obligate intracellular parasite.</title>
        <authorList>
            <person name="Ogata H."/>
            <person name="Renesto P."/>
            <person name="Audic S."/>
            <person name="Robert C."/>
            <person name="Blanc G."/>
            <person name="Fournier P.-E."/>
            <person name="Parinello H."/>
            <person name="Claverie J.-M."/>
            <person name="Raoult D."/>
        </authorList>
    </citation>
    <scope>NUCLEOTIDE SEQUENCE [LARGE SCALE GENOMIC DNA]</scope>
    <source>
        <strain>ATCC VR-1525 / URRWXCal2</strain>
    </source>
</reference>
<protein>
    <recommendedName>
        <fullName evidence="1">DNA gyrase subunit A</fullName>
        <ecNumber evidence="1">5.6.2.2</ecNumber>
    </recommendedName>
</protein>
<keyword id="KW-0067">ATP-binding</keyword>
<keyword id="KW-0963">Cytoplasm</keyword>
<keyword id="KW-0238">DNA-binding</keyword>
<keyword id="KW-0413">Isomerase</keyword>
<keyword id="KW-0547">Nucleotide-binding</keyword>
<keyword id="KW-0799">Topoisomerase</keyword>
<gene>
    <name evidence="1" type="primary">gyrA</name>
    <name type="ordered locus">RF_1055</name>
</gene>
<feature type="chain" id="PRO_0000273108" description="DNA gyrase subunit A">
    <location>
        <begin position="1"/>
        <end position="906"/>
    </location>
</feature>
<feature type="domain" description="Topo IIA-type catalytic" evidence="2">
    <location>
        <begin position="35"/>
        <end position="524"/>
    </location>
</feature>
<feature type="region of interest" description="Disordered" evidence="3">
    <location>
        <begin position="886"/>
        <end position="906"/>
    </location>
</feature>
<feature type="short sequence motif" description="GyrA-box" evidence="1">
    <location>
        <begin position="551"/>
        <end position="557"/>
    </location>
</feature>
<feature type="active site" description="O-(5'-phospho-DNA)-tyrosine intermediate" evidence="1">
    <location>
        <position position="123"/>
    </location>
</feature>
<comment type="function">
    <text evidence="1">A type II topoisomerase that negatively supercoils closed circular double-stranded (ds) DNA in an ATP-dependent manner to modulate DNA topology and maintain chromosomes in an underwound state. Negative supercoiling favors strand separation, and DNA replication, transcription, recombination and repair, all of which involve strand separation. Also able to catalyze the interconversion of other topological isomers of dsDNA rings, including catenanes and knotted rings. Type II topoisomerases break and join 2 DNA strands simultaneously in an ATP-dependent manner.</text>
</comment>
<comment type="catalytic activity">
    <reaction evidence="1">
        <text>ATP-dependent breakage, passage and rejoining of double-stranded DNA.</text>
        <dbReference type="EC" id="5.6.2.2"/>
    </reaction>
</comment>
<comment type="subunit">
    <text evidence="1">Heterotetramer, composed of two GyrA and two GyrB chains. In the heterotetramer, GyrA contains the active site tyrosine that forms a transient covalent intermediate with DNA, while GyrB binds cofactors and catalyzes ATP hydrolysis.</text>
</comment>
<comment type="subcellular location">
    <subcellularLocation>
        <location evidence="1">Cytoplasm</location>
    </subcellularLocation>
</comment>
<comment type="miscellaneous">
    <text evidence="1">Few gyrases are as efficient as E.coli at forming negative supercoils. Not all organisms have 2 type II topoisomerases; in organisms with a single type II topoisomerase this enzyme also has to decatenate newly replicated chromosomes.</text>
</comment>
<comment type="similarity">
    <text evidence="1">Belongs to the type II topoisomerase GyrA/ParC subunit family.</text>
</comment>
<dbReference type="EC" id="5.6.2.2" evidence="1"/>
<dbReference type="EMBL" id="CP000053">
    <property type="protein sequence ID" value="AAY61906.1"/>
    <property type="molecule type" value="Genomic_DNA"/>
</dbReference>
<dbReference type="SMR" id="Q4UKM1"/>
<dbReference type="STRING" id="315456.RF_1055"/>
<dbReference type="KEGG" id="rfe:RF_1055"/>
<dbReference type="eggNOG" id="COG0188">
    <property type="taxonomic scope" value="Bacteria"/>
</dbReference>
<dbReference type="HOGENOM" id="CLU_002977_6_1_5"/>
<dbReference type="OrthoDB" id="9806486at2"/>
<dbReference type="Proteomes" id="UP000008548">
    <property type="component" value="Chromosome"/>
</dbReference>
<dbReference type="GO" id="GO:0005694">
    <property type="term" value="C:chromosome"/>
    <property type="evidence" value="ECO:0007669"/>
    <property type="project" value="InterPro"/>
</dbReference>
<dbReference type="GO" id="GO:0005737">
    <property type="term" value="C:cytoplasm"/>
    <property type="evidence" value="ECO:0007669"/>
    <property type="project" value="UniProtKB-SubCell"/>
</dbReference>
<dbReference type="GO" id="GO:0009330">
    <property type="term" value="C:DNA topoisomerase type II (double strand cut, ATP-hydrolyzing) complex"/>
    <property type="evidence" value="ECO:0007669"/>
    <property type="project" value="TreeGrafter"/>
</dbReference>
<dbReference type="GO" id="GO:0005524">
    <property type="term" value="F:ATP binding"/>
    <property type="evidence" value="ECO:0007669"/>
    <property type="project" value="UniProtKB-UniRule"/>
</dbReference>
<dbReference type="GO" id="GO:0003677">
    <property type="term" value="F:DNA binding"/>
    <property type="evidence" value="ECO:0007669"/>
    <property type="project" value="UniProtKB-UniRule"/>
</dbReference>
<dbReference type="GO" id="GO:0034335">
    <property type="term" value="F:DNA negative supercoiling activity"/>
    <property type="evidence" value="ECO:0007669"/>
    <property type="project" value="UniProtKB-ARBA"/>
</dbReference>
<dbReference type="GO" id="GO:0006265">
    <property type="term" value="P:DNA topological change"/>
    <property type="evidence" value="ECO:0007669"/>
    <property type="project" value="UniProtKB-UniRule"/>
</dbReference>
<dbReference type="GO" id="GO:0006261">
    <property type="term" value="P:DNA-templated DNA replication"/>
    <property type="evidence" value="ECO:0007669"/>
    <property type="project" value="UniProtKB-UniRule"/>
</dbReference>
<dbReference type="CDD" id="cd00187">
    <property type="entry name" value="TOP4c"/>
    <property type="match status" value="1"/>
</dbReference>
<dbReference type="FunFam" id="1.10.268.10:FF:000001">
    <property type="entry name" value="DNA gyrase subunit A"/>
    <property type="match status" value="1"/>
</dbReference>
<dbReference type="FunFam" id="3.30.1360.40:FF:000002">
    <property type="entry name" value="DNA gyrase subunit A"/>
    <property type="match status" value="1"/>
</dbReference>
<dbReference type="FunFam" id="3.90.199.10:FF:000001">
    <property type="entry name" value="DNA gyrase subunit A"/>
    <property type="match status" value="1"/>
</dbReference>
<dbReference type="Gene3D" id="3.30.1360.40">
    <property type="match status" value="1"/>
</dbReference>
<dbReference type="Gene3D" id="2.120.10.90">
    <property type="entry name" value="DNA gyrase/topoisomerase IV, subunit A, C-terminal"/>
    <property type="match status" value="1"/>
</dbReference>
<dbReference type="Gene3D" id="3.90.199.10">
    <property type="entry name" value="Topoisomerase II, domain 5"/>
    <property type="match status" value="1"/>
</dbReference>
<dbReference type="Gene3D" id="1.10.268.10">
    <property type="entry name" value="Topoisomerase, domain 3"/>
    <property type="match status" value="1"/>
</dbReference>
<dbReference type="HAMAP" id="MF_01897">
    <property type="entry name" value="GyrA"/>
    <property type="match status" value="1"/>
</dbReference>
<dbReference type="InterPro" id="IPR005743">
    <property type="entry name" value="GyrA"/>
</dbReference>
<dbReference type="InterPro" id="IPR006691">
    <property type="entry name" value="GyrA/parC_rep"/>
</dbReference>
<dbReference type="InterPro" id="IPR035516">
    <property type="entry name" value="Gyrase/topoIV_suA_C"/>
</dbReference>
<dbReference type="InterPro" id="IPR013760">
    <property type="entry name" value="Topo_IIA-like_dom_sf"/>
</dbReference>
<dbReference type="InterPro" id="IPR013758">
    <property type="entry name" value="Topo_IIA_A/C_ab"/>
</dbReference>
<dbReference type="InterPro" id="IPR013757">
    <property type="entry name" value="Topo_IIA_A_a_sf"/>
</dbReference>
<dbReference type="InterPro" id="IPR002205">
    <property type="entry name" value="Topo_IIA_dom_A"/>
</dbReference>
<dbReference type="InterPro" id="IPR050220">
    <property type="entry name" value="Type_II_DNA_Topoisomerases"/>
</dbReference>
<dbReference type="NCBIfam" id="TIGR01063">
    <property type="entry name" value="gyrA"/>
    <property type="match status" value="1"/>
</dbReference>
<dbReference type="NCBIfam" id="NF004043">
    <property type="entry name" value="PRK05560.1"/>
    <property type="match status" value="1"/>
</dbReference>
<dbReference type="NCBIfam" id="NF004044">
    <property type="entry name" value="PRK05561.1"/>
    <property type="match status" value="1"/>
</dbReference>
<dbReference type="PANTHER" id="PTHR43493:SF5">
    <property type="entry name" value="DNA GYRASE SUBUNIT A, CHLOROPLASTIC_MITOCHONDRIAL"/>
    <property type="match status" value="1"/>
</dbReference>
<dbReference type="PANTHER" id="PTHR43493">
    <property type="entry name" value="DNA GYRASE/TOPOISOMERASE SUBUNIT A"/>
    <property type="match status" value="1"/>
</dbReference>
<dbReference type="Pfam" id="PF03989">
    <property type="entry name" value="DNA_gyraseA_C"/>
    <property type="match status" value="6"/>
</dbReference>
<dbReference type="Pfam" id="PF00521">
    <property type="entry name" value="DNA_topoisoIV"/>
    <property type="match status" value="1"/>
</dbReference>
<dbReference type="SMART" id="SM00434">
    <property type="entry name" value="TOP4c"/>
    <property type="match status" value="1"/>
</dbReference>
<dbReference type="SUPFAM" id="SSF101904">
    <property type="entry name" value="GyrA/ParC C-terminal domain-like"/>
    <property type="match status" value="1"/>
</dbReference>
<dbReference type="SUPFAM" id="SSF56719">
    <property type="entry name" value="Type II DNA topoisomerase"/>
    <property type="match status" value="1"/>
</dbReference>
<dbReference type="PROSITE" id="PS52040">
    <property type="entry name" value="TOPO_IIA"/>
    <property type="match status" value="1"/>
</dbReference>
<accession>Q4UKM1</accession>
<sequence>MTDQNFSNLVPVNIEDEMKVSYLDYAMSVIVSRAIPDVRDGLKPVHRRIIYSMYEAGNHASKPYRKSARIVGDVMGKYHPHGDSAIYDSLVRMAQDFSLRLPLVDGQGNFGSMDGDAAAAMRYTESRMAKVSHKLVEDIDKETVSFNPNYDGSEEEPSVLPAMFPNLLVNGSGGIAVGMATNIPPHNLGEVIDACCLYIDNNDIEILDLLEVVKGPDFPTGSMILGISGIRSAYLTGRGSIIMRGRAEIENIGNSRQAIIITEIPYMVNKARLVEKIAEMVKEKRIEGISDLRDESNKNGVRIFIELKKDVVVEVVLNQIYACTQLQTSFGVIMLALKDGLPKVMNLKEVIAAFVSFREVVITNRTIYLLNKARDRAHILLGLTIAVSNIDEIIRIIKASNNPNAAKQELMARSWDALNILPLVKLVDDKAMLNEQGKCSFTEVQAKAILEMRLQRLTAMEKNKLEEDLKNLATEITEYLNILGSRTRLLEILKEELIKVKEEFATPRLTSIEFGEFDQDIEDLIQREEMVVTVTLGGYIKRVPLSSYRAQKRGGKGRSGLSMRDEDITTQVFVGSTHTPMLFFSNIGQVYSLKLYKLPLSNPQGKGRPMVNILPLKENEHITNIMPLPENQDEWDNLNIMFATAKGNIRRSDLLDFKKIQSNGKIAIRLDEDDKLIDVKPCKEDEHILLATKAGKALRFPVESLRVIKSRTSDGVRGMKLAKEDSVISMTVLKGISSTKEDRDAYLTVPWEKRLEIAKGEEFNLEELGVTLTADSILEMANSEEFILTVTENGFGKRSSAYGYRITDRGGSGIINMDINDKTGLVVGVMPVKMDDELMLITNSGKLIRCKLESVRITGRNTSGVILFKLDDGEKVVSVSLIAETSESEEDSELEEDLEQAEEVYT</sequence>